<comment type="function">
    <text evidence="1">Globally modulates RNA abundance by binding to RNase E (Rne) and regulating its endonucleolytic activity. Can modulate Rne action in a substrate-dependent manner by altering the composition of the degradosome. Modulates RNA-binding and helicase activities of the degradosome.</text>
</comment>
<comment type="subunit">
    <text evidence="1">Homotrimer. Binds to both RNA-binding sites in the C-terminal region of Rne and to RhlB.</text>
</comment>
<comment type="subcellular location">
    <subcellularLocation>
        <location evidence="1">Cytoplasm</location>
    </subcellularLocation>
</comment>
<comment type="similarity">
    <text evidence="1">Belongs to the RraA family.</text>
</comment>
<feature type="chain" id="PRO_1000013872" description="Regulator of ribonuclease activity A">
    <location>
        <begin position="1"/>
        <end position="161"/>
    </location>
</feature>
<sequence>MKYDTSELCDIYQEDVNVVEPLFSNFGGRASFGGQIITVKCFEDNGLLYDLLEQNGRGRVLVVDGGGSVRRALVDAELARLAVQNEWEGLVIYGAVRQVDDLEELDIGIQAMAAIPVGAAGEGIGESDVRVNFGGVTFFSGDHLYADNTGIILSEDPLDIE</sequence>
<reference key="1">
    <citation type="journal article" date="2005" name="Nucleic Acids Res.">
        <title>Genome dynamics and diversity of Shigella species, the etiologic agents of bacillary dysentery.</title>
        <authorList>
            <person name="Yang F."/>
            <person name="Yang J."/>
            <person name="Zhang X."/>
            <person name="Chen L."/>
            <person name="Jiang Y."/>
            <person name="Yan Y."/>
            <person name="Tang X."/>
            <person name="Wang J."/>
            <person name="Xiong Z."/>
            <person name="Dong J."/>
            <person name="Xue Y."/>
            <person name="Zhu Y."/>
            <person name="Xu X."/>
            <person name="Sun L."/>
            <person name="Chen S."/>
            <person name="Nie H."/>
            <person name="Peng J."/>
            <person name="Xu J."/>
            <person name="Wang Y."/>
            <person name="Yuan Z."/>
            <person name="Wen Y."/>
            <person name="Yao Z."/>
            <person name="Shen Y."/>
            <person name="Qiang B."/>
            <person name="Hou Y."/>
            <person name="Yu J."/>
            <person name="Jin Q."/>
        </authorList>
    </citation>
    <scope>NUCLEOTIDE SEQUENCE [LARGE SCALE GENOMIC DNA]</scope>
    <source>
        <strain>Sb227</strain>
    </source>
</reference>
<gene>
    <name evidence="1" type="primary">rraA</name>
    <name type="ordered locus">SBO_3946</name>
</gene>
<name>RRAA_SHIBS</name>
<keyword id="KW-0963">Cytoplasm</keyword>
<proteinExistence type="inferred from homology"/>
<accession>Q31U61</accession>
<protein>
    <recommendedName>
        <fullName evidence="1">Regulator of ribonuclease activity A</fullName>
    </recommendedName>
</protein>
<organism>
    <name type="scientific">Shigella boydii serotype 4 (strain Sb227)</name>
    <dbReference type="NCBI Taxonomy" id="300268"/>
    <lineage>
        <taxon>Bacteria</taxon>
        <taxon>Pseudomonadati</taxon>
        <taxon>Pseudomonadota</taxon>
        <taxon>Gammaproteobacteria</taxon>
        <taxon>Enterobacterales</taxon>
        <taxon>Enterobacteriaceae</taxon>
        <taxon>Shigella</taxon>
    </lineage>
</organism>
<evidence type="ECO:0000255" key="1">
    <source>
        <dbReference type="HAMAP-Rule" id="MF_00471"/>
    </source>
</evidence>
<dbReference type="EMBL" id="CP000036">
    <property type="protein sequence ID" value="ABB68397.1"/>
    <property type="molecule type" value="Genomic_DNA"/>
</dbReference>
<dbReference type="RefSeq" id="WP_000872908.1">
    <property type="nucleotide sequence ID" value="NC_007613.1"/>
</dbReference>
<dbReference type="SMR" id="Q31U61"/>
<dbReference type="GeneID" id="93777969"/>
<dbReference type="KEGG" id="sbo:SBO_3946"/>
<dbReference type="HOGENOM" id="CLU_072626_4_0_6"/>
<dbReference type="Proteomes" id="UP000007067">
    <property type="component" value="Chromosome"/>
</dbReference>
<dbReference type="GO" id="GO:0005829">
    <property type="term" value="C:cytosol"/>
    <property type="evidence" value="ECO:0007669"/>
    <property type="project" value="TreeGrafter"/>
</dbReference>
<dbReference type="GO" id="GO:0060698">
    <property type="term" value="F:endoribonuclease inhibitor activity"/>
    <property type="evidence" value="ECO:0007669"/>
    <property type="project" value="UniProtKB-UniRule"/>
</dbReference>
<dbReference type="GO" id="GO:0019899">
    <property type="term" value="F:enzyme binding"/>
    <property type="evidence" value="ECO:0007669"/>
    <property type="project" value="UniProtKB-UniRule"/>
</dbReference>
<dbReference type="GO" id="GO:1902369">
    <property type="term" value="P:negative regulation of RNA catabolic process"/>
    <property type="evidence" value="ECO:0007669"/>
    <property type="project" value="TreeGrafter"/>
</dbReference>
<dbReference type="CDD" id="cd16841">
    <property type="entry name" value="RraA_family"/>
    <property type="match status" value="1"/>
</dbReference>
<dbReference type="FunFam" id="3.50.30.40:FF:000001">
    <property type="entry name" value="Regulator of ribonuclease activity A"/>
    <property type="match status" value="1"/>
</dbReference>
<dbReference type="Gene3D" id="3.50.30.40">
    <property type="entry name" value="Ribonuclease E inhibitor RraA/RraA-like"/>
    <property type="match status" value="1"/>
</dbReference>
<dbReference type="HAMAP" id="MF_00471">
    <property type="entry name" value="RraA"/>
    <property type="match status" value="1"/>
</dbReference>
<dbReference type="InterPro" id="IPR010203">
    <property type="entry name" value="RraA"/>
</dbReference>
<dbReference type="InterPro" id="IPR005493">
    <property type="entry name" value="RraA/RraA-like"/>
</dbReference>
<dbReference type="InterPro" id="IPR036704">
    <property type="entry name" value="RraA/RraA-like_sf"/>
</dbReference>
<dbReference type="InterPro" id="IPR014339">
    <property type="entry name" value="RraA_gpbac"/>
</dbReference>
<dbReference type="NCBIfam" id="TIGR01935">
    <property type="entry name" value="NOT-MenG"/>
    <property type="match status" value="1"/>
</dbReference>
<dbReference type="NCBIfam" id="NF006875">
    <property type="entry name" value="PRK09372.1"/>
    <property type="match status" value="1"/>
</dbReference>
<dbReference type="NCBIfam" id="TIGR02998">
    <property type="entry name" value="RraA_entero"/>
    <property type="match status" value="1"/>
</dbReference>
<dbReference type="PANTHER" id="PTHR33254">
    <property type="entry name" value="4-HYDROXY-4-METHYL-2-OXOGLUTARATE ALDOLASE 3-RELATED"/>
    <property type="match status" value="1"/>
</dbReference>
<dbReference type="PANTHER" id="PTHR33254:SF29">
    <property type="entry name" value="REGULATOR OF RIBONUCLEASE ACTIVITY A"/>
    <property type="match status" value="1"/>
</dbReference>
<dbReference type="Pfam" id="PF03737">
    <property type="entry name" value="RraA-like"/>
    <property type="match status" value="1"/>
</dbReference>
<dbReference type="SUPFAM" id="SSF89562">
    <property type="entry name" value="RraA-like"/>
    <property type="match status" value="1"/>
</dbReference>